<protein>
    <recommendedName>
        <fullName evidence="1">Protease HtpX homolog</fullName>
        <ecNumber evidence="1">3.4.24.-</ecNumber>
    </recommendedName>
</protein>
<name>HTPX_LEUMM</name>
<evidence type="ECO:0000255" key="1">
    <source>
        <dbReference type="HAMAP-Rule" id="MF_00188"/>
    </source>
</evidence>
<dbReference type="EC" id="3.4.24.-" evidence="1"/>
<dbReference type="EMBL" id="CP000414">
    <property type="protein sequence ID" value="ABJ61753.1"/>
    <property type="molecule type" value="Genomic_DNA"/>
</dbReference>
<dbReference type="RefSeq" id="WP_011679450.1">
    <property type="nucleotide sequence ID" value="NC_008531.1"/>
</dbReference>
<dbReference type="EnsemblBacteria" id="ABJ61753">
    <property type="protein sequence ID" value="ABJ61753"/>
    <property type="gene ID" value="LEUM_0640"/>
</dbReference>
<dbReference type="GeneID" id="29576742"/>
<dbReference type="KEGG" id="lme:LEUM_0640"/>
<dbReference type="eggNOG" id="COG0501">
    <property type="taxonomic scope" value="Bacteria"/>
</dbReference>
<dbReference type="HOGENOM" id="CLU_042266_2_1_9"/>
<dbReference type="Proteomes" id="UP000000362">
    <property type="component" value="Chromosome"/>
</dbReference>
<dbReference type="GO" id="GO:0005886">
    <property type="term" value="C:plasma membrane"/>
    <property type="evidence" value="ECO:0007669"/>
    <property type="project" value="UniProtKB-SubCell"/>
</dbReference>
<dbReference type="GO" id="GO:0004222">
    <property type="term" value="F:metalloendopeptidase activity"/>
    <property type="evidence" value="ECO:0007669"/>
    <property type="project" value="UniProtKB-UniRule"/>
</dbReference>
<dbReference type="GO" id="GO:0008270">
    <property type="term" value="F:zinc ion binding"/>
    <property type="evidence" value="ECO:0007669"/>
    <property type="project" value="UniProtKB-UniRule"/>
</dbReference>
<dbReference type="GO" id="GO:0006508">
    <property type="term" value="P:proteolysis"/>
    <property type="evidence" value="ECO:0007669"/>
    <property type="project" value="UniProtKB-KW"/>
</dbReference>
<dbReference type="CDD" id="cd07340">
    <property type="entry name" value="M48B_Htpx_like"/>
    <property type="match status" value="1"/>
</dbReference>
<dbReference type="Gene3D" id="3.30.2010.10">
    <property type="entry name" value="Metalloproteases ('zincins'), catalytic domain"/>
    <property type="match status" value="1"/>
</dbReference>
<dbReference type="HAMAP" id="MF_00188">
    <property type="entry name" value="Pept_M48_protease_HtpX"/>
    <property type="match status" value="1"/>
</dbReference>
<dbReference type="InterPro" id="IPR050083">
    <property type="entry name" value="HtpX_protease"/>
</dbReference>
<dbReference type="InterPro" id="IPR022919">
    <property type="entry name" value="Pept_M48_protease_HtpX"/>
</dbReference>
<dbReference type="InterPro" id="IPR001915">
    <property type="entry name" value="Peptidase_M48"/>
</dbReference>
<dbReference type="NCBIfam" id="NF003425">
    <property type="entry name" value="PRK04897.1"/>
    <property type="match status" value="1"/>
</dbReference>
<dbReference type="PANTHER" id="PTHR43221">
    <property type="entry name" value="PROTEASE HTPX"/>
    <property type="match status" value="1"/>
</dbReference>
<dbReference type="PANTHER" id="PTHR43221:SF1">
    <property type="entry name" value="PROTEASE HTPX"/>
    <property type="match status" value="1"/>
</dbReference>
<dbReference type="Pfam" id="PF01435">
    <property type="entry name" value="Peptidase_M48"/>
    <property type="match status" value="1"/>
</dbReference>
<proteinExistence type="inferred from homology"/>
<gene>
    <name evidence="1" type="primary">htpX</name>
    <name type="ordered locus">LEUM_0640</name>
</gene>
<comment type="cofactor">
    <cofactor evidence="1">
        <name>Zn(2+)</name>
        <dbReference type="ChEBI" id="CHEBI:29105"/>
    </cofactor>
    <text evidence="1">Binds 1 zinc ion per subunit.</text>
</comment>
<comment type="subcellular location">
    <subcellularLocation>
        <location evidence="1">Cell membrane</location>
        <topology evidence="1">Multi-pass membrane protein</topology>
    </subcellularLocation>
</comment>
<comment type="similarity">
    <text evidence="1">Belongs to the peptidase M48B family.</text>
</comment>
<reference key="1">
    <citation type="journal article" date="2006" name="Proc. Natl. Acad. Sci. U.S.A.">
        <title>Comparative genomics of the lactic acid bacteria.</title>
        <authorList>
            <person name="Makarova K.S."/>
            <person name="Slesarev A."/>
            <person name="Wolf Y.I."/>
            <person name="Sorokin A."/>
            <person name="Mirkin B."/>
            <person name="Koonin E.V."/>
            <person name="Pavlov A."/>
            <person name="Pavlova N."/>
            <person name="Karamychev V."/>
            <person name="Polouchine N."/>
            <person name="Shakhova V."/>
            <person name="Grigoriev I."/>
            <person name="Lou Y."/>
            <person name="Rohksar D."/>
            <person name="Lucas S."/>
            <person name="Huang K."/>
            <person name="Goodstein D.M."/>
            <person name="Hawkins T."/>
            <person name="Plengvidhya V."/>
            <person name="Welker D."/>
            <person name="Hughes J."/>
            <person name="Goh Y."/>
            <person name="Benson A."/>
            <person name="Baldwin K."/>
            <person name="Lee J.-H."/>
            <person name="Diaz-Muniz I."/>
            <person name="Dosti B."/>
            <person name="Smeianov V."/>
            <person name="Wechter W."/>
            <person name="Barabote R."/>
            <person name="Lorca G."/>
            <person name="Altermann E."/>
            <person name="Barrangou R."/>
            <person name="Ganesan B."/>
            <person name="Xie Y."/>
            <person name="Rawsthorne H."/>
            <person name="Tamir D."/>
            <person name="Parker C."/>
            <person name="Breidt F."/>
            <person name="Broadbent J.R."/>
            <person name="Hutkins R."/>
            <person name="O'Sullivan D."/>
            <person name="Steele J."/>
            <person name="Unlu G."/>
            <person name="Saier M.H. Jr."/>
            <person name="Klaenhammer T."/>
            <person name="Richardson P."/>
            <person name="Kozyavkin S."/>
            <person name="Weimer B.C."/>
            <person name="Mills D.A."/>
        </authorList>
    </citation>
    <scope>NUCLEOTIDE SEQUENCE [LARGE SCALE GENOMIC DNA]</scope>
    <source>
        <strain>ATCC 8293 / DSM 20343 / BCRC 11652 / CCM 1803 / JCM 6124 / NCDO 523 / NBRC 100496 / NCIMB 8023 / NCTC 12954 / NRRL B-1118 / 37Y</strain>
    </source>
</reference>
<feature type="chain" id="PRO_1000020883" description="Protease HtpX homolog">
    <location>
        <begin position="1"/>
        <end position="297"/>
    </location>
</feature>
<feature type="transmembrane region" description="Helical" evidence="1">
    <location>
        <begin position="14"/>
        <end position="34"/>
    </location>
</feature>
<feature type="transmembrane region" description="Helical" evidence="1">
    <location>
        <begin position="38"/>
        <end position="58"/>
    </location>
</feature>
<feature type="transmembrane region" description="Helical" evidence="1">
    <location>
        <begin position="159"/>
        <end position="179"/>
    </location>
</feature>
<feature type="transmembrane region" description="Helical" evidence="1">
    <location>
        <begin position="199"/>
        <end position="219"/>
    </location>
</feature>
<feature type="active site" evidence="1">
    <location>
        <position position="145"/>
    </location>
</feature>
<feature type="binding site" evidence="1">
    <location>
        <position position="144"/>
    </location>
    <ligand>
        <name>Zn(2+)</name>
        <dbReference type="ChEBI" id="CHEBI:29105"/>
        <note>catalytic</note>
    </ligand>
</feature>
<feature type="binding site" evidence="1">
    <location>
        <position position="148"/>
    </location>
    <ligand>
        <name>Zn(2+)</name>
        <dbReference type="ChEBI" id="CHEBI:29105"/>
        <note>catalytic</note>
    </ligand>
</feature>
<feature type="binding site" evidence="1">
    <location>
        <position position="228"/>
    </location>
    <ligand>
        <name>Zn(2+)</name>
        <dbReference type="ChEBI" id="CHEBI:29105"/>
        <note>catalytic</note>
    </ligand>
</feature>
<keyword id="KW-1003">Cell membrane</keyword>
<keyword id="KW-0378">Hydrolase</keyword>
<keyword id="KW-0472">Membrane</keyword>
<keyword id="KW-0479">Metal-binding</keyword>
<keyword id="KW-0482">Metalloprotease</keyword>
<keyword id="KW-0645">Protease</keyword>
<keyword id="KW-1185">Reference proteome</keyword>
<keyword id="KW-0812">Transmembrane</keyword>
<keyword id="KW-1133">Transmembrane helix</keyword>
<keyword id="KW-0862">Zinc</keyword>
<organism>
    <name type="scientific">Leuconostoc mesenteroides subsp. mesenteroides (strain ATCC 8293 / DSM 20343 / BCRC 11652 / CCM 1803 / JCM 6124 / NCDO 523 / NBRC 100496 / NCIMB 8023 / NCTC 12954 / NRRL B-1118 / 37Y)</name>
    <dbReference type="NCBI Taxonomy" id="203120"/>
    <lineage>
        <taxon>Bacteria</taxon>
        <taxon>Bacillati</taxon>
        <taxon>Bacillota</taxon>
        <taxon>Bacilli</taxon>
        <taxon>Lactobacillales</taxon>
        <taxon>Lactobacillaceae</taxon>
        <taxon>Leuconostoc</taxon>
    </lineage>
</organism>
<sequence>MLYQQIQSNKRRTIVLLFVFFILVALVGAAVGYLLLNSLETGVVAAIVIGAIYTIIMVSNSTNVVMAMNHGHEIKNADQAPELWHTVEDMAMVAQVPMPRVFIIDDDSPNAFATGNNPEHSAVAATTGLLKIMNRSELEGVIAHEMSHVRNYDIRISTIALALAAAITLLTNIGGNWWFWGSGDRRRNDDRNGGGGLQILLLVFSILMMVLAPLAAAAIQMAISRNREYLADAGSAELTRNPQGLISALRKLGNAQPMKDVDSSSAALYISNPLKNKERLFDTHPPIEERIDRLEKM</sequence>
<accession>Q03YG9</accession>